<reference key="1">
    <citation type="journal article" date="2009" name="Environ. Microbiol.">
        <title>The genome of Polaromonas naphthalenivorans strain CJ2, isolated from coal tar-contaminated sediment, reveals physiological and metabolic versatility and evolution through extensive horizontal gene transfer.</title>
        <authorList>
            <person name="Yagi J.M."/>
            <person name="Sims D."/>
            <person name="Brettin T."/>
            <person name="Bruce D."/>
            <person name="Madsen E.L."/>
        </authorList>
    </citation>
    <scope>NUCLEOTIDE SEQUENCE [LARGE SCALE GENOMIC DNA]</scope>
    <source>
        <strain>CJ2</strain>
    </source>
</reference>
<evidence type="ECO:0000255" key="1">
    <source>
        <dbReference type="HAMAP-Rule" id="MF_00340"/>
    </source>
</evidence>
<evidence type="ECO:0000256" key="2">
    <source>
        <dbReference type="SAM" id="MobiDB-lite"/>
    </source>
</evidence>
<evidence type="ECO:0000305" key="3"/>
<comment type="similarity">
    <text evidence="1">Belongs to the bacterial ribosomal protein bL32 family.</text>
</comment>
<feature type="chain" id="PRO_0000296524" description="Large ribosomal subunit protein bL32">
    <location>
        <begin position="1"/>
        <end position="60"/>
    </location>
</feature>
<feature type="region of interest" description="Disordered" evidence="2">
    <location>
        <begin position="1"/>
        <end position="25"/>
    </location>
</feature>
<feature type="compositionally biased region" description="Basic residues" evidence="2">
    <location>
        <begin position="9"/>
        <end position="19"/>
    </location>
</feature>
<accession>A1VRU9</accession>
<name>RL32_POLNA</name>
<sequence>MAVQQNKKSPSKRGMHRSHNALNVPGIAVESTTGEIHLRHHISPTGFYRGRKVLKTKAEA</sequence>
<keyword id="KW-1185">Reference proteome</keyword>
<keyword id="KW-0687">Ribonucleoprotein</keyword>
<keyword id="KW-0689">Ribosomal protein</keyword>
<protein>
    <recommendedName>
        <fullName evidence="1">Large ribosomal subunit protein bL32</fullName>
    </recommendedName>
    <alternativeName>
        <fullName evidence="3">50S ribosomal protein L32</fullName>
    </alternativeName>
</protein>
<dbReference type="EMBL" id="CP000529">
    <property type="protein sequence ID" value="ABM38377.1"/>
    <property type="molecule type" value="Genomic_DNA"/>
</dbReference>
<dbReference type="RefSeq" id="WP_011802449.1">
    <property type="nucleotide sequence ID" value="NC_008781.1"/>
</dbReference>
<dbReference type="SMR" id="A1VRU9"/>
<dbReference type="STRING" id="365044.Pnap_3078"/>
<dbReference type="KEGG" id="pna:Pnap_3078"/>
<dbReference type="eggNOG" id="COG0333">
    <property type="taxonomic scope" value="Bacteria"/>
</dbReference>
<dbReference type="HOGENOM" id="CLU_129084_2_1_4"/>
<dbReference type="OrthoDB" id="9801927at2"/>
<dbReference type="Proteomes" id="UP000000644">
    <property type="component" value="Chromosome"/>
</dbReference>
<dbReference type="GO" id="GO:0015934">
    <property type="term" value="C:large ribosomal subunit"/>
    <property type="evidence" value="ECO:0007669"/>
    <property type="project" value="InterPro"/>
</dbReference>
<dbReference type="GO" id="GO:0003735">
    <property type="term" value="F:structural constituent of ribosome"/>
    <property type="evidence" value="ECO:0007669"/>
    <property type="project" value="InterPro"/>
</dbReference>
<dbReference type="GO" id="GO:0006412">
    <property type="term" value="P:translation"/>
    <property type="evidence" value="ECO:0007669"/>
    <property type="project" value="UniProtKB-UniRule"/>
</dbReference>
<dbReference type="HAMAP" id="MF_00340">
    <property type="entry name" value="Ribosomal_bL32"/>
    <property type="match status" value="1"/>
</dbReference>
<dbReference type="InterPro" id="IPR002677">
    <property type="entry name" value="Ribosomal_bL32"/>
</dbReference>
<dbReference type="InterPro" id="IPR044957">
    <property type="entry name" value="Ribosomal_bL32_bact"/>
</dbReference>
<dbReference type="InterPro" id="IPR011332">
    <property type="entry name" value="Ribosomal_zn-bd"/>
</dbReference>
<dbReference type="NCBIfam" id="TIGR01031">
    <property type="entry name" value="rpmF_bact"/>
    <property type="match status" value="1"/>
</dbReference>
<dbReference type="PANTHER" id="PTHR35534">
    <property type="entry name" value="50S RIBOSOMAL PROTEIN L32"/>
    <property type="match status" value="1"/>
</dbReference>
<dbReference type="PANTHER" id="PTHR35534:SF1">
    <property type="entry name" value="LARGE RIBOSOMAL SUBUNIT PROTEIN BL32"/>
    <property type="match status" value="1"/>
</dbReference>
<dbReference type="Pfam" id="PF01783">
    <property type="entry name" value="Ribosomal_L32p"/>
    <property type="match status" value="1"/>
</dbReference>
<dbReference type="SUPFAM" id="SSF57829">
    <property type="entry name" value="Zn-binding ribosomal proteins"/>
    <property type="match status" value="1"/>
</dbReference>
<organism>
    <name type="scientific">Polaromonas naphthalenivorans (strain CJ2)</name>
    <dbReference type="NCBI Taxonomy" id="365044"/>
    <lineage>
        <taxon>Bacteria</taxon>
        <taxon>Pseudomonadati</taxon>
        <taxon>Pseudomonadota</taxon>
        <taxon>Betaproteobacteria</taxon>
        <taxon>Burkholderiales</taxon>
        <taxon>Comamonadaceae</taxon>
        <taxon>Polaromonas</taxon>
    </lineage>
</organism>
<proteinExistence type="inferred from homology"/>
<gene>
    <name evidence="1" type="primary">rpmF</name>
    <name type="ordered locus">Pnap_3078</name>
</gene>